<name>ERI6B_HUMAN</name>
<reference key="1">
    <citation type="journal article" date="2004" name="Nat. Genet.">
        <title>Complete sequencing and characterization of 21,243 full-length human cDNAs.</title>
        <authorList>
            <person name="Ota T."/>
            <person name="Suzuki Y."/>
            <person name="Nishikawa T."/>
            <person name="Otsuki T."/>
            <person name="Sugiyama T."/>
            <person name="Irie R."/>
            <person name="Wakamatsu A."/>
            <person name="Hayashi K."/>
            <person name="Sato H."/>
            <person name="Nagai K."/>
            <person name="Kimura K."/>
            <person name="Makita H."/>
            <person name="Sekine M."/>
            <person name="Obayashi M."/>
            <person name="Nishi T."/>
            <person name="Shibahara T."/>
            <person name="Tanaka T."/>
            <person name="Ishii S."/>
            <person name="Yamamoto J."/>
            <person name="Saito K."/>
            <person name="Kawai Y."/>
            <person name="Isono Y."/>
            <person name="Nakamura Y."/>
            <person name="Nagahari K."/>
            <person name="Murakami K."/>
            <person name="Yasuda T."/>
            <person name="Iwayanagi T."/>
            <person name="Wagatsuma M."/>
            <person name="Shiratori A."/>
            <person name="Sudo H."/>
            <person name="Hosoiri T."/>
            <person name="Kaku Y."/>
            <person name="Kodaira H."/>
            <person name="Kondo H."/>
            <person name="Sugawara M."/>
            <person name="Takahashi M."/>
            <person name="Kanda K."/>
            <person name="Yokoi T."/>
            <person name="Furuya T."/>
            <person name="Kikkawa E."/>
            <person name="Omura Y."/>
            <person name="Abe K."/>
            <person name="Kamihara K."/>
            <person name="Katsuta N."/>
            <person name="Sato K."/>
            <person name="Tanikawa M."/>
            <person name="Yamazaki M."/>
            <person name="Ninomiya K."/>
            <person name="Ishibashi T."/>
            <person name="Yamashita H."/>
            <person name="Murakawa K."/>
            <person name="Fujimori K."/>
            <person name="Tanai H."/>
            <person name="Kimata M."/>
            <person name="Watanabe M."/>
            <person name="Hiraoka S."/>
            <person name="Chiba Y."/>
            <person name="Ishida S."/>
            <person name="Ono Y."/>
            <person name="Takiguchi S."/>
            <person name="Watanabe S."/>
            <person name="Yosida M."/>
            <person name="Hotuta T."/>
            <person name="Kusano J."/>
            <person name="Kanehori K."/>
            <person name="Takahashi-Fujii A."/>
            <person name="Hara H."/>
            <person name="Tanase T.-O."/>
            <person name="Nomura Y."/>
            <person name="Togiya S."/>
            <person name="Komai F."/>
            <person name="Hara R."/>
            <person name="Takeuchi K."/>
            <person name="Arita M."/>
            <person name="Imose N."/>
            <person name="Musashino K."/>
            <person name="Yuuki H."/>
            <person name="Oshima A."/>
            <person name="Sasaki N."/>
            <person name="Aotsuka S."/>
            <person name="Yoshikawa Y."/>
            <person name="Matsunawa H."/>
            <person name="Ichihara T."/>
            <person name="Shiohata N."/>
            <person name="Sano S."/>
            <person name="Moriya S."/>
            <person name="Momiyama H."/>
            <person name="Satoh N."/>
            <person name="Takami S."/>
            <person name="Terashima Y."/>
            <person name="Suzuki O."/>
            <person name="Nakagawa S."/>
            <person name="Senoh A."/>
            <person name="Mizoguchi H."/>
            <person name="Goto Y."/>
            <person name="Shimizu F."/>
            <person name="Wakebe H."/>
            <person name="Hishigaki H."/>
            <person name="Watanabe T."/>
            <person name="Sugiyama A."/>
            <person name="Takemoto M."/>
            <person name="Kawakami B."/>
            <person name="Yamazaki M."/>
            <person name="Watanabe K."/>
            <person name="Kumagai A."/>
            <person name="Itakura S."/>
            <person name="Fukuzumi Y."/>
            <person name="Fujimori Y."/>
            <person name="Komiyama M."/>
            <person name="Tashiro H."/>
            <person name="Tanigami A."/>
            <person name="Fujiwara T."/>
            <person name="Ono T."/>
            <person name="Yamada K."/>
            <person name="Fujii Y."/>
            <person name="Ozaki K."/>
            <person name="Hirao M."/>
            <person name="Ohmori Y."/>
            <person name="Kawabata A."/>
            <person name="Hikiji T."/>
            <person name="Kobatake N."/>
            <person name="Inagaki H."/>
            <person name="Ikema Y."/>
            <person name="Okamoto S."/>
            <person name="Okitani R."/>
            <person name="Kawakami T."/>
            <person name="Noguchi S."/>
            <person name="Itoh T."/>
            <person name="Shigeta K."/>
            <person name="Senba T."/>
            <person name="Matsumura K."/>
            <person name="Nakajima Y."/>
            <person name="Mizuno T."/>
            <person name="Morinaga M."/>
            <person name="Sasaki M."/>
            <person name="Togashi T."/>
            <person name="Oyama M."/>
            <person name="Hata H."/>
            <person name="Watanabe M."/>
            <person name="Komatsu T."/>
            <person name="Mizushima-Sugano J."/>
            <person name="Satoh T."/>
            <person name="Shirai Y."/>
            <person name="Takahashi Y."/>
            <person name="Nakagawa K."/>
            <person name="Okumura K."/>
            <person name="Nagase T."/>
            <person name="Nomura N."/>
            <person name="Kikuchi H."/>
            <person name="Masuho Y."/>
            <person name="Yamashita R."/>
            <person name="Nakai K."/>
            <person name="Yada T."/>
            <person name="Nakamura Y."/>
            <person name="Ohara O."/>
            <person name="Isogai T."/>
            <person name="Sugano S."/>
        </authorList>
    </citation>
    <scope>NUCLEOTIDE SEQUENCE [LARGE SCALE MRNA] (ISOFORM 2)</scope>
    <scope>VARIANT LYS-178</scope>
    <source>
        <tissue>Testis</tissue>
    </source>
</reference>
<reference key="2">
    <citation type="journal article" date="2004" name="Nature">
        <title>The DNA sequence and analysis of human chromosome 13.</title>
        <authorList>
            <person name="Dunham A."/>
            <person name="Matthews L.H."/>
            <person name="Burton J."/>
            <person name="Ashurst J.L."/>
            <person name="Howe K.L."/>
            <person name="Ashcroft K.J."/>
            <person name="Beare D.M."/>
            <person name="Burford D.C."/>
            <person name="Hunt S.E."/>
            <person name="Griffiths-Jones S."/>
            <person name="Jones M.C."/>
            <person name="Keenan S.J."/>
            <person name="Oliver K."/>
            <person name="Scott C.E."/>
            <person name="Ainscough R."/>
            <person name="Almeida J.P."/>
            <person name="Ambrose K.D."/>
            <person name="Andrews D.T."/>
            <person name="Ashwell R.I.S."/>
            <person name="Babbage A.K."/>
            <person name="Bagguley C.L."/>
            <person name="Bailey J."/>
            <person name="Bannerjee R."/>
            <person name="Barlow K.F."/>
            <person name="Bates K."/>
            <person name="Beasley H."/>
            <person name="Bird C.P."/>
            <person name="Bray-Allen S."/>
            <person name="Brown A.J."/>
            <person name="Brown J.Y."/>
            <person name="Burrill W."/>
            <person name="Carder C."/>
            <person name="Carter N.P."/>
            <person name="Chapman J.C."/>
            <person name="Clamp M.E."/>
            <person name="Clark S.Y."/>
            <person name="Clarke G."/>
            <person name="Clee C.M."/>
            <person name="Clegg S.C."/>
            <person name="Cobley V."/>
            <person name="Collins J.E."/>
            <person name="Corby N."/>
            <person name="Coville G.J."/>
            <person name="Deloukas P."/>
            <person name="Dhami P."/>
            <person name="Dunham I."/>
            <person name="Dunn M."/>
            <person name="Earthrowl M.E."/>
            <person name="Ellington A.G."/>
            <person name="Faulkner L."/>
            <person name="Frankish A.G."/>
            <person name="Frankland J."/>
            <person name="French L."/>
            <person name="Garner P."/>
            <person name="Garnett J."/>
            <person name="Gilbert J.G.R."/>
            <person name="Gilson C.J."/>
            <person name="Ghori J."/>
            <person name="Grafham D.V."/>
            <person name="Gribble S.M."/>
            <person name="Griffiths C."/>
            <person name="Hall R.E."/>
            <person name="Hammond S."/>
            <person name="Harley J.L."/>
            <person name="Hart E.A."/>
            <person name="Heath P.D."/>
            <person name="Howden P.J."/>
            <person name="Huckle E.J."/>
            <person name="Hunt P.J."/>
            <person name="Hunt A.R."/>
            <person name="Johnson C."/>
            <person name="Johnson D."/>
            <person name="Kay M."/>
            <person name="Kimberley A.M."/>
            <person name="King A."/>
            <person name="Laird G.K."/>
            <person name="Langford C.J."/>
            <person name="Lawlor S."/>
            <person name="Leongamornlert D.A."/>
            <person name="Lloyd D.M."/>
            <person name="Lloyd C."/>
            <person name="Loveland J.E."/>
            <person name="Lovell J."/>
            <person name="Martin S."/>
            <person name="Mashreghi-Mohammadi M."/>
            <person name="McLaren S.J."/>
            <person name="McMurray A."/>
            <person name="Milne S."/>
            <person name="Moore M.J.F."/>
            <person name="Nickerson T."/>
            <person name="Palmer S.A."/>
            <person name="Pearce A.V."/>
            <person name="Peck A.I."/>
            <person name="Pelan S."/>
            <person name="Phillimore B."/>
            <person name="Porter K.M."/>
            <person name="Rice C.M."/>
            <person name="Searle S."/>
            <person name="Sehra H.K."/>
            <person name="Shownkeen R."/>
            <person name="Skuce C.D."/>
            <person name="Smith M."/>
            <person name="Steward C.A."/>
            <person name="Sycamore N."/>
            <person name="Tester J."/>
            <person name="Thomas D.W."/>
            <person name="Tracey A."/>
            <person name="Tromans A."/>
            <person name="Tubby B."/>
            <person name="Wall M."/>
            <person name="Wallis J.M."/>
            <person name="West A.P."/>
            <person name="Whitehead S.L."/>
            <person name="Willey D.L."/>
            <person name="Wilming L."/>
            <person name="Wray P.W."/>
            <person name="Wright M.W."/>
            <person name="Young L."/>
            <person name="Coulson A."/>
            <person name="Durbin R.M."/>
            <person name="Hubbard T."/>
            <person name="Sulston J.E."/>
            <person name="Beck S."/>
            <person name="Bentley D.R."/>
            <person name="Rogers J."/>
            <person name="Ross M.T."/>
        </authorList>
    </citation>
    <scope>NUCLEOTIDE SEQUENCE [LARGE SCALE GENOMIC DNA]</scope>
</reference>
<protein>
    <recommendedName>
        <fullName>Glutamate-rich protein 6B</fullName>
    </recommendedName>
    <alternativeName>
        <fullName>Protein FAM194B</fullName>
    </alternativeName>
</protein>
<keyword id="KW-0025">Alternative splicing</keyword>
<keyword id="KW-1267">Proteomics identification</keyword>
<keyword id="KW-1185">Reference proteome</keyword>
<evidence type="ECO:0000256" key="1">
    <source>
        <dbReference type="SAM" id="MobiDB-lite"/>
    </source>
</evidence>
<evidence type="ECO:0000269" key="2">
    <source>
    </source>
</evidence>
<evidence type="ECO:0000303" key="3">
    <source>
    </source>
</evidence>
<evidence type="ECO:0000305" key="4"/>
<proteinExistence type="evidence at protein level"/>
<dbReference type="EMBL" id="AK057244">
    <property type="protein sequence ID" value="BAB71393.1"/>
    <property type="molecule type" value="mRNA"/>
</dbReference>
<dbReference type="EMBL" id="AL139326">
    <property type="status" value="NOT_ANNOTATED_CDS"/>
    <property type="molecule type" value="Genomic_DNA"/>
</dbReference>
<dbReference type="CCDS" id="CCDS45045.1">
    <molecule id="Q5W0A0-1"/>
</dbReference>
<dbReference type="RefSeq" id="NP_872348.2">
    <molecule id="Q5W0A0-1"/>
    <property type="nucleotide sequence ID" value="NM_182542.2"/>
</dbReference>
<dbReference type="RefSeq" id="XP_016875907.1">
    <molecule id="Q5W0A0-1"/>
    <property type="nucleotide sequence ID" value="XM_017020418.2"/>
</dbReference>
<dbReference type="BioGRID" id="128626">
    <property type="interactions" value="8"/>
</dbReference>
<dbReference type="FunCoup" id="Q5W0A0">
    <property type="interactions" value="15"/>
</dbReference>
<dbReference type="IntAct" id="Q5W0A0">
    <property type="interactions" value="2"/>
</dbReference>
<dbReference type="MINT" id="Q5W0A0"/>
<dbReference type="STRING" id="9606.ENSP00000298738"/>
<dbReference type="GlyGen" id="Q5W0A0">
    <property type="glycosylation" value="1 site"/>
</dbReference>
<dbReference type="iPTMnet" id="Q5W0A0"/>
<dbReference type="PhosphoSitePlus" id="Q5W0A0"/>
<dbReference type="BioMuta" id="ERICH6B"/>
<dbReference type="DMDM" id="74747903"/>
<dbReference type="MassIVE" id="Q5W0A0"/>
<dbReference type="PaxDb" id="9606-ENSP00000298738"/>
<dbReference type="PeptideAtlas" id="Q5W0A0"/>
<dbReference type="ProteomicsDB" id="65755">
    <molecule id="Q5W0A0-1"/>
</dbReference>
<dbReference type="ProteomicsDB" id="65756">
    <molecule id="Q5W0A0-2"/>
</dbReference>
<dbReference type="Antibodypedia" id="57850">
    <property type="antibodies" value="19 antibodies from 8 providers"/>
</dbReference>
<dbReference type="DNASU" id="220081"/>
<dbReference type="Ensembl" id="ENST00000298738.3">
    <molecule id="Q5W0A0-1"/>
    <property type="protein sequence ID" value="ENSP00000298738.2"/>
    <property type="gene ID" value="ENSG00000165837.12"/>
</dbReference>
<dbReference type="GeneID" id="220081"/>
<dbReference type="KEGG" id="hsa:220081"/>
<dbReference type="MANE-Select" id="ENST00000298738.3">
    <property type="protein sequence ID" value="ENSP00000298738.2"/>
    <property type="RefSeq nucleotide sequence ID" value="NM_182542.3"/>
    <property type="RefSeq protein sequence ID" value="NP_872348.2"/>
</dbReference>
<dbReference type="UCSC" id="uc001val.2">
    <molecule id="Q5W0A0-1"/>
    <property type="organism name" value="human"/>
</dbReference>
<dbReference type="AGR" id="HGNC:26523"/>
<dbReference type="CTD" id="220081"/>
<dbReference type="DisGeNET" id="220081"/>
<dbReference type="GeneCards" id="ERICH6B"/>
<dbReference type="HGNC" id="HGNC:26523">
    <property type="gene designation" value="ERICH6B"/>
</dbReference>
<dbReference type="HPA" id="ENSG00000165837">
    <property type="expression patterns" value="Tissue enriched (testis)"/>
</dbReference>
<dbReference type="neXtProt" id="NX_Q5W0A0"/>
<dbReference type="PharmGKB" id="PA165505094"/>
<dbReference type="VEuPathDB" id="HostDB:ENSG00000165837"/>
<dbReference type="eggNOG" id="ENOG502S2BR">
    <property type="taxonomic scope" value="Eukaryota"/>
</dbReference>
<dbReference type="GeneTree" id="ENSGT00940000153655"/>
<dbReference type="HOGENOM" id="CLU_025846_0_0_1"/>
<dbReference type="InParanoid" id="Q5W0A0"/>
<dbReference type="OMA" id="NVMEFAS"/>
<dbReference type="OrthoDB" id="527209at2759"/>
<dbReference type="PAN-GO" id="Q5W0A0">
    <property type="GO annotations" value="0 GO annotations based on evolutionary models"/>
</dbReference>
<dbReference type="PhylomeDB" id="Q5W0A0"/>
<dbReference type="TreeFam" id="TF350393"/>
<dbReference type="PathwayCommons" id="Q5W0A0"/>
<dbReference type="SignaLink" id="Q5W0A0"/>
<dbReference type="BioGRID-ORCS" id="220081">
    <property type="hits" value="49 hits in 1140 CRISPR screens"/>
</dbReference>
<dbReference type="ChiTaRS" id="ERICH6B">
    <property type="organism name" value="human"/>
</dbReference>
<dbReference type="GenomeRNAi" id="220081"/>
<dbReference type="Pharos" id="Q5W0A0">
    <property type="development level" value="Tdark"/>
</dbReference>
<dbReference type="PRO" id="PR:Q5W0A0"/>
<dbReference type="Proteomes" id="UP000005640">
    <property type="component" value="Chromosome 13"/>
</dbReference>
<dbReference type="RNAct" id="Q5W0A0">
    <property type="molecule type" value="protein"/>
</dbReference>
<dbReference type="Bgee" id="ENSG00000165837">
    <property type="expression patterns" value="Expressed in male germ line stem cell (sensu Vertebrata) in testis and 93 other cell types or tissues"/>
</dbReference>
<dbReference type="InterPro" id="IPR029281">
    <property type="entry name" value="FAM194_C"/>
</dbReference>
<dbReference type="PANTHER" id="PTHR23093:SF17">
    <property type="entry name" value="GLUTAMATE-RICH PROTEIN 6B"/>
    <property type="match status" value="1"/>
</dbReference>
<dbReference type="PANTHER" id="PTHR23093">
    <property type="entry name" value="SIMILAR TO CHROMOSOME 3 OPEN READING FRAME 20"/>
    <property type="match status" value="1"/>
</dbReference>
<dbReference type="Pfam" id="PF14977">
    <property type="entry name" value="FAM194"/>
    <property type="match status" value="1"/>
</dbReference>
<organism>
    <name type="scientific">Homo sapiens</name>
    <name type="common">Human</name>
    <dbReference type="NCBI Taxonomy" id="9606"/>
    <lineage>
        <taxon>Eukaryota</taxon>
        <taxon>Metazoa</taxon>
        <taxon>Chordata</taxon>
        <taxon>Craniata</taxon>
        <taxon>Vertebrata</taxon>
        <taxon>Euteleostomi</taxon>
        <taxon>Mammalia</taxon>
        <taxon>Eutheria</taxon>
        <taxon>Euarchontoglires</taxon>
        <taxon>Primates</taxon>
        <taxon>Haplorrhini</taxon>
        <taxon>Catarrhini</taxon>
        <taxon>Hominidae</taxon>
        <taxon>Homo</taxon>
    </lineage>
</organism>
<feature type="chain" id="PRO_0000326050" description="Glutamate-rich protein 6B">
    <location>
        <begin position="1"/>
        <end position="696"/>
    </location>
</feature>
<feature type="region of interest" description="Disordered" evidence="1">
    <location>
        <begin position="1"/>
        <end position="105"/>
    </location>
</feature>
<feature type="compositionally biased region" description="Polar residues" evidence="1">
    <location>
        <begin position="1"/>
        <end position="10"/>
    </location>
</feature>
<feature type="compositionally biased region" description="Acidic residues" evidence="1">
    <location>
        <begin position="32"/>
        <end position="44"/>
    </location>
</feature>
<feature type="compositionally biased region" description="Acidic residues" evidence="1">
    <location>
        <begin position="54"/>
        <end position="72"/>
    </location>
</feature>
<feature type="compositionally biased region" description="Basic and acidic residues" evidence="1">
    <location>
        <begin position="73"/>
        <end position="91"/>
    </location>
</feature>
<feature type="splice variant" id="VSP_032523" description="In isoform 2." evidence="3">
    <location>
        <begin position="134"/>
        <end position="139"/>
    </location>
</feature>
<feature type="sequence variant" id="VAR_039969" description="In dbSNP:rs12020217.">
    <original>E</original>
    <variation>D</variation>
    <location>
        <position position="63"/>
    </location>
</feature>
<feature type="sequence variant" id="VAR_039970" description="In dbSNP:rs12020731.">
    <original>E</original>
    <variation>G</variation>
    <location>
        <position position="99"/>
    </location>
</feature>
<feature type="sequence variant" id="VAR_039971" description="In dbSNP:rs17066954.">
    <original>S</original>
    <variation>T</variation>
    <location>
        <position position="174"/>
    </location>
</feature>
<feature type="sequence variant" id="VAR_039972" description="In dbSNP:rs3014939." evidence="2">
    <original>E</original>
    <variation>K</variation>
    <location>
        <position position="178"/>
    </location>
</feature>
<feature type="sequence variant" id="VAR_039973" description="In dbSNP:rs11618506.">
    <original>L</original>
    <variation>P</variation>
    <location>
        <position position="303"/>
    </location>
</feature>
<feature type="sequence variant" id="VAR_039974" description="In dbSNP:rs749071.">
    <original>T</original>
    <variation>I</variation>
    <location>
        <position position="427"/>
    </location>
</feature>
<feature type="sequence variant" id="VAR_039975" description="In dbSNP:rs12429125.">
    <original>P</original>
    <variation>R</variation>
    <location>
        <position position="439"/>
    </location>
</feature>
<feature type="sequence variant" id="VAR_039976" description="In dbSNP:rs17066902.">
    <original>H</original>
    <variation>R</variation>
    <location>
        <position position="453"/>
    </location>
</feature>
<feature type="sequence variant" id="VAR_039977" description="In dbSNP:rs7327901.">
    <original>R</original>
    <variation>C</variation>
    <location>
        <position position="565"/>
    </location>
</feature>
<feature type="sequence variant" id="VAR_039978" description="In dbSNP:rs1536207.">
    <original>V</original>
    <variation>F</variation>
    <location>
        <position position="653"/>
    </location>
</feature>
<feature type="sequence conflict" description="In Ref. 1; BAB71393." evidence="4" ref="1">
    <original>A</original>
    <variation>V</variation>
    <location>
        <position position="101"/>
    </location>
</feature>
<comment type="alternative products">
    <event type="alternative splicing"/>
    <isoform>
        <id>Q5W0A0-1</id>
        <name>1</name>
        <sequence type="displayed"/>
    </isoform>
    <isoform>
        <id>Q5W0A0-2</id>
        <name>2</name>
        <sequence type="described" ref="VSP_032523"/>
    </isoform>
</comment>
<comment type="similarity">
    <text evidence="4">Belongs to the ERICH6 family.</text>
</comment>
<accession>Q5W0A0</accession>
<accession>Q96MB5</accession>
<sequence>MSAENNQLSGASPPHPPTTPQYSTQNLPSEKEDTEVELDEESLQDESPFSPEGESLEDKEYLEEEEDLEEEEYLGKEEYLKEEEYLGKEEHLEEEEYLEKAGYLEEEEYIEEEEYLGKEGYLEEEEYLGKEEHLEEEEYLGKEGYLEKEDYIEEVDYLGKKAYLEEEEYLGKKSYLEEEKALEKEENLEEEEALEKEENLDGKENLYKKYLKEPKASYSSQTMLLRDARSPDAGPSQVTTFLTVPLTFATPSPVSESATESSELLLTLYRRSQASQTDWCYDRTAVKSLKSKSETEQETTTKLAPEEHVNTKVQQKKEENVLEFASKENFWDGITDESIDKLEVEDLDENFLNSSYQTVFKTIIKEMAAHNELEEDFDIPLTKLLESENRWKLVIMLKKNYEKFKETILRIKRRREAQKLTEMTSFTFHLMSKPTPEKPETEEIQKPQRVVHHRKKLERDKEWIQKKTVVHQGDGKLILYPNKNVYQILFPDGTGQIHYPSGNLAMLILYAKMKKFTYIILEDSLEGRIRALINNSGNATFYDENSDIWLNLSSNLGYYFPKDKRQKAWNWWNLNIHVHAPPVQPISLKINEYIQVQIRSQDKIIFCFTYEQKQICLNLGTRYKFVIPEVLSEMKKKTILEAEPGPTAQKIRVLLGKMNRLLNYATTPDLENFIEAVSISLMDNKYLKKMLSKLWF</sequence>
<gene>
    <name type="primary">ERICH6B</name>
    <name type="synonym">FAM194B</name>
</gene>